<comment type="function">
    <text evidence="2">Component of the ubiquinol-cytochrome c reductase complex (complex III or cytochrome b-c1 complex) that is part of the mitochondrial respiratory chain. The b-c1 complex mediates electron transfer from ubiquinol to cytochrome c. Contributes to the generation of a proton gradient across the mitochondrial membrane that is then used for ATP synthesis.</text>
</comment>
<comment type="cofactor">
    <cofactor evidence="2">
        <name>heme b</name>
        <dbReference type="ChEBI" id="CHEBI:60344"/>
    </cofactor>
    <text evidence="2">Binds 2 heme b groups non-covalently.</text>
</comment>
<comment type="subunit">
    <text evidence="2">The cytochrome bc1 complex contains 11 subunits: 3 respiratory subunits (MT-CYB, CYC1 and UQCRFS1), 2 core proteins (UQCRC1 and UQCRC2) and 6 low-molecular weight proteins (UQCRH/QCR6, UQCRB/QCR7, UQCRQ/QCR8, UQCR10/QCR9, UQCR11/QCR10 and a cleavage product of UQCRFS1). This cytochrome bc1 complex then forms a dimer.</text>
</comment>
<comment type="subcellular location">
    <subcellularLocation>
        <location evidence="2">Mitochondrion inner membrane</location>
        <topology evidence="2">Multi-pass membrane protein</topology>
    </subcellularLocation>
</comment>
<comment type="miscellaneous">
    <text evidence="1">Heme 1 (or BL or b562) is low-potential and absorbs at about 562 nm, and heme 2 (or BH or b566) is high-potential and absorbs at about 566 nm.</text>
</comment>
<comment type="similarity">
    <text evidence="3 4">Belongs to the cytochrome b family.</text>
</comment>
<comment type="caution">
    <text evidence="2">The full-length protein contains only eight transmembrane helices, not nine as predicted by bioinformatics tools.</text>
</comment>
<geneLocation type="mitochondrion"/>
<feature type="chain" id="PRO_0000061700" description="Cytochrome b">
    <location>
        <begin position="1"/>
        <end position="379"/>
    </location>
</feature>
<feature type="transmembrane region" description="Helical" evidence="2">
    <location>
        <begin position="33"/>
        <end position="53"/>
    </location>
</feature>
<feature type="transmembrane region" description="Helical" evidence="2">
    <location>
        <begin position="77"/>
        <end position="98"/>
    </location>
</feature>
<feature type="transmembrane region" description="Helical" evidence="2">
    <location>
        <begin position="113"/>
        <end position="133"/>
    </location>
</feature>
<feature type="transmembrane region" description="Helical" evidence="2">
    <location>
        <begin position="178"/>
        <end position="198"/>
    </location>
</feature>
<feature type="transmembrane region" description="Helical" evidence="2">
    <location>
        <begin position="226"/>
        <end position="246"/>
    </location>
</feature>
<feature type="transmembrane region" description="Helical" evidence="2">
    <location>
        <begin position="288"/>
        <end position="308"/>
    </location>
</feature>
<feature type="transmembrane region" description="Helical" evidence="2">
    <location>
        <begin position="320"/>
        <end position="340"/>
    </location>
</feature>
<feature type="transmembrane region" description="Helical" evidence="2">
    <location>
        <begin position="347"/>
        <end position="367"/>
    </location>
</feature>
<feature type="binding site" description="axial binding residue" evidence="2">
    <location>
        <position position="83"/>
    </location>
    <ligand>
        <name>heme b</name>
        <dbReference type="ChEBI" id="CHEBI:60344"/>
        <label>b562</label>
    </ligand>
    <ligandPart>
        <name>Fe</name>
        <dbReference type="ChEBI" id="CHEBI:18248"/>
    </ligandPart>
</feature>
<feature type="binding site" description="axial binding residue" evidence="2">
    <location>
        <position position="97"/>
    </location>
    <ligand>
        <name>heme b</name>
        <dbReference type="ChEBI" id="CHEBI:60344"/>
        <label>b566</label>
    </ligand>
    <ligandPart>
        <name>Fe</name>
        <dbReference type="ChEBI" id="CHEBI:18248"/>
    </ligandPart>
</feature>
<feature type="binding site" description="axial binding residue" evidence="2">
    <location>
        <position position="182"/>
    </location>
    <ligand>
        <name>heme b</name>
        <dbReference type="ChEBI" id="CHEBI:60344"/>
        <label>b562</label>
    </ligand>
    <ligandPart>
        <name>Fe</name>
        <dbReference type="ChEBI" id="CHEBI:18248"/>
    </ligandPart>
</feature>
<feature type="binding site" description="axial binding residue" evidence="2">
    <location>
        <position position="196"/>
    </location>
    <ligand>
        <name>heme b</name>
        <dbReference type="ChEBI" id="CHEBI:60344"/>
        <label>b566</label>
    </ligand>
    <ligandPart>
        <name>Fe</name>
        <dbReference type="ChEBI" id="CHEBI:18248"/>
    </ligandPart>
</feature>
<feature type="binding site" evidence="2">
    <location>
        <position position="201"/>
    </location>
    <ligand>
        <name>a ubiquinone</name>
        <dbReference type="ChEBI" id="CHEBI:16389"/>
    </ligand>
</feature>
<feature type="sequence variant" description="In strain: Isolate HEG86-97.">
    <original>I</original>
    <variation>V</variation>
    <location>
        <position position="156"/>
    </location>
</feature>
<feature type="sequence variant" description="In strain: Isolate HEG86-97.">
    <original>VLT</original>
    <variation>ALS</variation>
    <location>
        <begin position="238"/>
        <end position="240"/>
    </location>
</feature>
<feature type="sequence variant" description="In strain: Isolate HEG86-97.">
    <original>M</original>
    <variation>A</variation>
    <location>
        <position position="360"/>
    </location>
</feature>
<evidence type="ECO:0000250" key="1"/>
<evidence type="ECO:0000250" key="2">
    <source>
        <dbReference type="UniProtKB" id="P00157"/>
    </source>
</evidence>
<evidence type="ECO:0000255" key="3">
    <source>
        <dbReference type="PROSITE-ProRule" id="PRU00967"/>
    </source>
</evidence>
<evidence type="ECO:0000255" key="4">
    <source>
        <dbReference type="PROSITE-ProRule" id="PRU00968"/>
    </source>
</evidence>
<gene>
    <name type="primary">MT-CYB</name>
    <name type="synonym">COB</name>
    <name type="synonym">CYTB</name>
    <name type="synonym">MTCYB</name>
</gene>
<dbReference type="EMBL" id="AB076830">
    <property type="protein sequence ID" value="BAC75915.1"/>
    <property type="molecule type" value="Genomic_DNA"/>
</dbReference>
<dbReference type="EMBL" id="AB076831">
    <property type="protein sequence ID" value="BAC75916.1"/>
    <property type="molecule type" value="Genomic_DNA"/>
</dbReference>
<dbReference type="SMR" id="Q85DE4"/>
<dbReference type="GO" id="GO:0005743">
    <property type="term" value="C:mitochondrial inner membrane"/>
    <property type="evidence" value="ECO:0007669"/>
    <property type="project" value="UniProtKB-SubCell"/>
</dbReference>
<dbReference type="GO" id="GO:0045275">
    <property type="term" value="C:respiratory chain complex III"/>
    <property type="evidence" value="ECO:0007669"/>
    <property type="project" value="InterPro"/>
</dbReference>
<dbReference type="GO" id="GO:0046872">
    <property type="term" value="F:metal ion binding"/>
    <property type="evidence" value="ECO:0007669"/>
    <property type="project" value="UniProtKB-KW"/>
</dbReference>
<dbReference type="GO" id="GO:0008121">
    <property type="term" value="F:ubiquinol-cytochrome-c reductase activity"/>
    <property type="evidence" value="ECO:0007669"/>
    <property type="project" value="InterPro"/>
</dbReference>
<dbReference type="GO" id="GO:0006122">
    <property type="term" value="P:mitochondrial electron transport, ubiquinol to cytochrome c"/>
    <property type="evidence" value="ECO:0007669"/>
    <property type="project" value="TreeGrafter"/>
</dbReference>
<dbReference type="CDD" id="cd00290">
    <property type="entry name" value="cytochrome_b_C"/>
    <property type="match status" value="1"/>
</dbReference>
<dbReference type="CDD" id="cd00284">
    <property type="entry name" value="Cytochrome_b_N"/>
    <property type="match status" value="1"/>
</dbReference>
<dbReference type="FunFam" id="1.20.810.10:FF:000002">
    <property type="entry name" value="Cytochrome b"/>
    <property type="match status" value="1"/>
</dbReference>
<dbReference type="Gene3D" id="1.20.810.10">
    <property type="entry name" value="Cytochrome Bc1 Complex, Chain C"/>
    <property type="match status" value="1"/>
</dbReference>
<dbReference type="InterPro" id="IPR005798">
    <property type="entry name" value="Cyt_b/b6_C"/>
</dbReference>
<dbReference type="InterPro" id="IPR036150">
    <property type="entry name" value="Cyt_b/b6_C_sf"/>
</dbReference>
<dbReference type="InterPro" id="IPR005797">
    <property type="entry name" value="Cyt_b/b6_N"/>
</dbReference>
<dbReference type="InterPro" id="IPR027387">
    <property type="entry name" value="Cytb/b6-like_sf"/>
</dbReference>
<dbReference type="InterPro" id="IPR030689">
    <property type="entry name" value="Cytochrome_b"/>
</dbReference>
<dbReference type="InterPro" id="IPR048260">
    <property type="entry name" value="Cytochrome_b_C_euk/bac"/>
</dbReference>
<dbReference type="InterPro" id="IPR048259">
    <property type="entry name" value="Cytochrome_b_N_euk/bac"/>
</dbReference>
<dbReference type="InterPro" id="IPR016174">
    <property type="entry name" value="Di-haem_cyt_TM"/>
</dbReference>
<dbReference type="PANTHER" id="PTHR19271">
    <property type="entry name" value="CYTOCHROME B"/>
    <property type="match status" value="1"/>
</dbReference>
<dbReference type="PANTHER" id="PTHR19271:SF16">
    <property type="entry name" value="CYTOCHROME B"/>
    <property type="match status" value="1"/>
</dbReference>
<dbReference type="Pfam" id="PF00032">
    <property type="entry name" value="Cytochrom_B_C"/>
    <property type="match status" value="1"/>
</dbReference>
<dbReference type="Pfam" id="PF00033">
    <property type="entry name" value="Cytochrome_B"/>
    <property type="match status" value="1"/>
</dbReference>
<dbReference type="PIRSF" id="PIRSF038885">
    <property type="entry name" value="COB"/>
    <property type="match status" value="1"/>
</dbReference>
<dbReference type="SUPFAM" id="SSF81648">
    <property type="entry name" value="a domain/subunit of cytochrome bc1 complex (Ubiquinol-cytochrome c reductase)"/>
    <property type="match status" value="1"/>
</dbReference>
<dbReference type="SUPFAM" id="SSF81342">
    <property type="entry name" value="Transmembrane di-heme cytochromes"/>
    <property type="match status" value="1"/>
</dbReference>
<dbReference type="PROSITE" id="PS51003">
    <property type="entry name" value="CYTB_CTER"/>
    <property type="match status" value="1"/>
</dbReference>
<dbReference type="PROSITE" id="PS51002">
    <property type="entry name" value="CYTB_NTER"/>
    <property type="match status" value="1"/>
</dbReference>
<keyword id="KW-0249">Electron transport</keyword>
<keyword id="KW-0349">Heme</keyword>
<keyword id="KW-0408">Iron</keyword>
<keyword id="KW-0472">Membrane</keyword>
<keyword id="KW-0479">Metal-binding</keyword>
<keyword id="KW-0496">Mitochondrion</keyword>
<keyword id="KW-0999">Mitochondrion inner membrane</keyword>
<keyword id="KW-0679">Respiratory chain</keyword>
<keyword id="KW-0812">Transmembrane</keyword>
<keyword id="KW-1133">Transmembrane helix</keyword>
<keyword id="KW-0813">Transport</keyword>
<keyword id="KW-0830">Ubiquinone</keyword>
<name>CYB_DYMPI</name>
<proteinExistence type="inferred from homology"/>
<accession>Q85DE4</accession>
<accession>Q85DE5</accession>
<organism>
    <name type="scientific">Dymecodon pilirostris</name>
    <name type="common">True's shrew mole</name>
    <name type="synonym">Urotrichus pilirostris</name>
    <dbReference type="NCBI Taxonomy" id="182680"/>
    <lineage>
        <taxon>Eukaryota</taxon>
        <taxon>Metazoa</taxon>
        <taxon>Chordata</taxon>
        <taxon>Craniata</taxon>
        <taxon>Vertebrata</taxon>
        <taxon>Euteleostomi</taxon>
        <taxon>Mammalia</taxon>
        <taxon>Eutheria</taxon>
        <taxon>Laurasiatheria</taxon>
        <taxon>Eulipotyphla</taxon>
        <taxon>Talpidae</taxon>
        <taxon>Dymecodon</taxon>
    </lineage>
</organism>
<reference key="1">
    <citation type="journal article" date="2003" name="Mol. Phylogenet. Evol.">
        <title>Molecular phylogenetic relationships of moles, shrew moles, and desmans from the new and old worlds.</title>
        <authorList>
            <person name="Shinohara A."/>
            <person name="Campbell K.L."/>
            <person name="Suzuki H."/>
        </authorList>
    </citation>
    <scope>NUCLEOTIDE SEQUENCE [GENOMIC DNA]</scope>
    <source>
        <strain>Isolate HEG86-97</strain>
        <strain>Isolate MH7126</strain>
    </source>
</reference>
<protein>
    <recommendedName>
        <fullName>Cytochrome b</fullName>
    </recommendedName>
    <alternativeName>
        <fullName>Complex III subunit 3</fullName>
    </alternativeName>
    <alternativeName>
        <fullName>Complex III subunit III</fullName>
    </alternativeName>
    <alternativeName>
        <fullName>Cytochrome b-c1 complex subunit 3</fullName>
    </alternativeName>
    <alternativeName>
        <fullName>Ubiquinol-cytochrome-c reductase complex cytochrome b subunit</fullName>
    </alternativeName>
</protein>
<sequence length="379" mass="42640">MTNLRKTHPLMKIINNSFIDLPAPSNISSWWNFGSLLGICLILQILTGLFLAMHYTSDTMTAFSSVTHICRDVNYGWLIRYLHANGASMFFICLFLHVGRGLYYGSYMFMETWNIGVILLFAVMATAFMGYVLPWGQMSFWGATVITNLLSAIPYIGTDLVEWIWGGFSVDKATLTRFFAFHFILPFVIAALAGVHLLFLHETGSNNPSGLTSDSDKIPFHPYYTIKDILGALILILVLTSLVLFSPDLLGDPDNYIPANPLNTPPHIKPEWYFLFAYAILRSIPNKLGGVLALVFSILVLALMPLLHTSKQRSMMFRPISQCLFWLLVADLFTLTWIGGQPVEHPFIIIGQLASILYFMLILVLMPIASLAENNLLKW</sequence>